<evidence type="ECO:0000250" key="1"/>
<evidence type="ECO:0000255" key="2"/>
<evidence type="ECO:0000256" key="3">
    <source>
        <dbReference type="SAM" id="MobiDB-lite"/>
    </source>
</evidence>
<evidence type="ECO:0000269" key="4">
    <source>
    </source>
</evidence>
<evidence type="ECO:0000305" key="5"/>
<organism>
    <name type="scientific">Xenopus laevis</name>
    <name type="common">African clawed frog</name>
    <dbReference type="NCBI Taxonomy" id="8355"/>
    <lineage>
        <taxon>Eukaryota</taxon>
        <taxon>Metazoa</taxon>
        <taxon>Chordata</taxon>
        <taxon>Craniata</taxon>
        <taxon>Vertebrata</taxon>
        <taxon>Euteleostomi</taxon>
        <taxon>Amphibia</taxon>
        <taxon>Batrachia</taxon>
        <taxon>Anura</taxon>
        <taxon>Pipoidea</taxon>
        <taxon>Pipidae</taxon>
        <taxon>Xenopodinae</taxon>
        <taxon>Xenopus</taxon>
        <taxon>Xenopus</taxon>
    </lineage>
</organism>
<comment type="function">
    <text>The pharmacological activities of caerulein are quite similar to the physiological activities of gastrin and related peptides.</text>
</comment>
<comment type="subcellular location">
    <subcellularLocation>
        <location>Secreted</location>
    </subcellularLocation>
</comment>
<comment type="tissue specificity">
    <text>Expressed by the skin glands.</text>
</comment>
<comment type="similarity">
    <text evidence="5">Belongs to the gastrin/cholecystokinin family.</text>
</comment>
<protein>
    <recommendedName>
        <fullName>Preprocaerulein type-4</fullName>
    </recommendedName>
    <alternativeName>
        <fullName>Preprocaerulein type IV</fullName>
    </alternativeName>
    <component>
        <recommendedName>
            <fullName>Caerulein</fullName>
        </recommendedName>
    </component>
</protein>
<dbReference type="EMBL" id="M12495">
    <property type="protein sequence ID" value="AAA49685.1"/>
    <property type="molecule type" value="mRNA"/>
</dbReference>
<dbReference type="EMBL" id="X01810">
    <property type="protein sequence ID" value="CAA25953.1"/>
    <property type="molecule type" value="mRNA"/>
</dbReference>
<dbReference type="PIR" id="C23364">
    <property type="entry name" value="SCXL"/>
</dbReference>
<dbReference type="RefSeq" id="NP_001080990.1">
    <property type="nucleotide sequence ID" value="NM_001087521.1"/>
</dbReference>
<dbReference type="SMR" id="P01357"/>
<dbReference type="DNASU" id="394315"/>
<dbReference type="GeneID" id="394315"/>
<dbReference type="KEGG" id="xla:394315"/>
<dbReference type="AGR" id="Xenbase:XB-GENE-6254459"/>
<dbReference type="CTD" id="394315"/>
<dbReference type="Xenbase" id="XB-GENE-6254459">
    <property type="gene designation" value="xt6l.L"/>
</dbReference>
<dbReference type="Proteomes" id="UP000186698">
    <property type="component" value="Chromosome 6L"/>
</dbReference>
<dbReference type="Bgee" id="394315">
    <property type="expression patterns" value="Expressed in zone of skin and 11 other cell types or tissues"/>
</dbReference>
<dbReference type="GO" id="GO:0030424">
    <property type="term" value="C:axon"/>
    <property type="evidence" value="ECO:0007669"/>
    <property type="project" value="TreeGrafter"/>
</dbReference>
<dbReference type="GO" id="GO:0005615">
    <property type="term" value="C:extracellular space"/>
    <property type="evidence" value="ECO:0007669"/>
    <property type="project" value="TreeGrafter"/>
</dbReference>
<dbReference type="GO" id="GO:0005184">
    <property type="term" value="F:neuropeptide hormone activity"/>
    <property type="evidence" value="ECO:0007669"/>
    <property type="project" value="InterPro"/>
</dbReference>
<dbReference type="GO" id="GO:0002777">
    <property type="term" value="P:antimicrobial peptide biosynthetic process"/>
    <property type="evidence" value="ECO:0000304"/>
    <property type="project" value="Xenbase"/>
</dbReference>
<dbReference type="GO" id="GO:0007586">
    <property type="term" value="P:digestion"/>
    <property type="evidence" value="ECO:0007669"/>
    <property type="project" value="InterPro"/>
</dbReference>
<dbReference type="GO" id="GO:0045087">
    <property type="term" value="P:innate immune response"/>
    <property type="evidence" value="ECO:0000304"/>
    <property type="project" value="Xenbase"/>
</dbReference>
<dbReference type="InterPro" id="IPR015499">
    <property type="entry name" value="CCK-like"/>
</dbReference>
<dbReference type="InterPro" id="IPR001651">
    <property type="entry name" value="Gastrin/CCK"/>
</dbReference>
<dbReference type="InterPro" id="IPR013152">
    <property type="entry name" value="Gastrin/cholecystokinin_CS"/>
</dbReference>
<dbReference type="PANTHER" id="PTHR10786">
    <property type="entry name" value="CHOLECYSTOKININ"/>
    <property type="match status" value="1"/>
</dbReference>
<dbReference type="PANTHER" id="PTHR10786:SF0">
    <property type="entry name" value="CHOLECYSTOKININ"/>
    <property type="match status" value="1"/>
</dbReference>
<dbReference type="Pfam" id="PF00918">
    <property type="entry name" value="Gastrin"/>
    <property type="match status" value="3"/>
</dbReference>
<dbReference type="SMART" id="SM00029">
    <property type="entry name" value="GASTRIN"/>
    <property type="match status" value="4"/>
</dbReference>
<dbReference type="PROSITE" id="PS00259">
    <property type="entry name" value="GASTRIN"/>
    <property type="match status" value="4"/>
</dbReference>
<proteinExistence type="evidence at protein level"/>
<keyword id="KW-0027">Amidation</keyword>
<keyword id="KW-0878">Amphibian defense peptide</keyword>
<keyword id="KW-0165">Cleavage on pair of basic residues</keyword>
<keyword id="KW-0903">Direct protein sequencing</keyword>
<keyword id="KW-0873">Pyrrolidone carboxylic acid</keyword>
<keyword id="KW-1185">Reference proteome</keyword>
<keyword id="KW-0677">Repeat</keyword>
<keyword id="KW-0964">Secreted</keyword>
<keyword id="KW-0732">Signal</keyword>
<keyword id="KW-0765">Sulfation</keyword>
<sequence length="233" mass="25953">MFKGILLCVLFAVLSANPLSQPEGFADEERDVRGLASLLGKALKATLKIGTHFLGGAPQQREANDERRFADGQQDYTGWMDFGRRDGQQDYTGWMDFGRRDDEDDVHERDVRGFGSFLGKALKAALKIGANALGGAPQQREANDERRFADGQQDYTGWMDFGRRDDEDDVNERDVRGFGSFLGKALKAALKIGANALGGSPQQREANDERRFADGQQDYTGWMDFGRRNGEDD</sequence>
<feature type="signal peptide" evidence="2">
    <location>
        <begin position="1"/>
        <end position="26"/>
    </location>
</feature>
<feature type="propeptide" id="PRO_0000010513" evidence="4">
    <location>
        <begin position="27"/>
        <end position="72"/>
    </location>
</feature>
<feature type="peptide" id="PRO_0000010514" description="Caerulein" evidence="4">
    <location>
        <begin position="73"/>
        <end position="82"/>
    </location>
</feature>
<feature type="propeptide" id="PRO_0000010515" evidence="4">
    <location>
        <begin position="86"/>
        <end position="87"/>
    </location>
</feature>
<feature type="peptide" id="PRO_0000010516" description="Caerulein" evidence="4">
    <location>
        <begin position="88"/>
        <end position="97"/>
    </location>
</feature>
<feature type="propeptide" id="PRO_0000010517" evidence="4">
    <location>
        <begin position="101"/>
        <end position="151"/>
    </location>
</feature>
<feature type="peptide" id="PRO_0000010518" description="Caerulein" evidence="4">
    <location>
        <begin position="152"/>
        <end position="161"/>
    </location>
</feature>
<feature type="propeptide" id="PRO_0000010519" evidence="4">
    <location>
        <begin position="165"/>
        <end position="215"/>
    </location>
</feature>
<feature type="peptide" id="PRO_0000010520" description="Caerulein" evidence="4">
    <location>
        <begin position="216"/>
        <end position="225"/>
    </location>
</feature>
<feature type="propeptide" id="PRO_0000010521" evidence="4">
    <location>
        <begin position="229"/>
        <end position="233"/>
    </location>
</feature>
<feature type="region of interest" description="Disordered" evidence="3">
    <location>
        <begin position="197"/>
        <end position="233"/>
    </location>
</feature>
<feature type="modified residue" description="Pyrrolidone carboxylic acid" evidence="1">
    <location>
        <position position="73"/>
    </location>
</feature>
<feature type="modified residue" description="Sulfotyrosine" evidence="1">
    <location>
        <position position="76"/>
    </location>
</feature>
<feature type="modified residue" description="Phenylalanine amide" evidence="1">
    <location>
        <position position="82"/>
    </location>
</feature>
<feature type="modified residue" description="Pyrrolidone carboxylic acid" evidence="1">
    <location>
        <position position="88"/>
    </location>
</feature>
<feature type="modified residue" description="Sulfotyrosine" evidence="1">
    <location>
        <position position="91"/>
    </location>
</feature>
<feature type="modified residue" description="Phenylalanine amide" evidence="1">
    <location>
        <position position="97"/>
    </location>
</feature>
<feature type="modified residue" description="Pyrrolidone carboxylic acid" evidence="1">
    <location>
        <position position="152"/>
    </location>
</feature>
<feature type="modified residue" description="Sulfotyrosine" evidence="1">
    <location>
        <position position="155"/>
    </location>
</feature>
<feature type="modified residue" description="Phenylalanine amide" evidence="1">
    <location>
        <position position="161"/>
    </location>
</feature>
<feature type="modified residue" description="Pyrrolidone carboxylic acid" evidence="1">
    <location>
        <position position="216"/>
    </location>
</feature>
<feature type="modified residue" description="Sulfotyrosine" evidence="1">
    <location>
        <position position="219"/>
    </location>
</feature>
<feature type="modified residue" description="Phenylalanine amide" evidence="1">
    <location>
        <position position="225"/>
    </location>
</feature>
<name>CAER4_XENLA</name>
<accession>P01357</accession>
<reference key="1">
    <citation type="journal article" date="1986" name="J. Biol. Chem.">
        <title>Sequence of preprocaerulein cDNAs cloned from skin of Xenopus laevis. A small family of precursors containing one, three, or four copies of the final product.</title>
        <authorList>
            <person name="Richter K."/>
            <person name="Egger R."/>
            <person name="Kreil G."/>
        </authorList>
    </citation>
    <scope>NUCLEOTIDE SEQUENCE [MRNA]</scope>
    <source>
        <tissue>Skin</tissue>
    </source>
</reference>
<reference key="2">
    <citation type="journal article" date="1983" name="EMBO J.">
        <title>Biosynthesis of caerulein in the skin of Xenopus laevis: partial sequences of precursors as deduced from cDNA clones.</title>
        <authorList>
            <person name="Hoffmann W."/>
            <person name="Bach T.C."/>
            <person name="Seliger H."/>
            <person name="Kreil G."/>
        </authorList>
    </citation>
    <scope>NUCLEOTIDE SEQUENCE [MRNA] OF 137-233</scope>
    <source>
        <tissue>Skin</tissue>
    </source>
</reference>
<reference key="3">
    <citation type="journal article" date="1970" name="Br. J. Pharmacol.">
        <title>Presence of caerulein in extracts of the skin of Leptodactylus pentadactylus labyrinthicus and of Xenopus laevis.</title>
        <authorList>
            <person name="Anastasi A."/>
            <person name="Bertaccini G."/>
            <person name="Cei J.M."/>
            <person name="de Daro G."/>
            <person name="Erspamer V."/>
            <person name="Impicciatore M."/>
            <person name="Roseghini M."/>
        </authorList>
    </citation>
    <scope>PROTEIN SEQUENCE OF CAERULEIN</scope>
    <source>
        <tissue>Skin secretion</tissue>
    </source>
</reference>